<keyword id="KW-1003">Cell membrane</keyword>
<keyword id="KW-0963">Cytoplasm</keyword>
<keyword id="KW-0333">Golgi apparatus</keyword>
<keyword id="KW-0472">Membrane</keyword>
<keyword id="KW-0539">Nucleus</keyword>
<keyword id="KW-0597">Phosphoprotein</keyword>
<keyword id="KW-1185">Reference proteome</keyword>
<dbReference type="EMBL" id="DP000026">
    <property type="protein sequence ID" value="ABC87458.1"/>
    <property type="molecule type" value="Genomic_DNA"/>
</dbReference>
<dbReference type="RefSeq" id="NP_001162006.1">
    <property type="nucleotide sequence ID" value="NM_001168534.1"/>
</dbReference>
<dbReference type="SMR" id="Q2IBD6"/>
<dbReference type="FunCoup" id="Q2IBD6">
    <property type="interactions" value="892"/>
</dbReference>
<dbReference type="STRING" id="9601.ENSPPYP00000020104"/>
<dbReference type="Ensembl" id="ENSPPYT00000020896.3">
    <property type="protein sequence ID" value="ENSPPYP00000020104.2"/>
    <property type="gene ID" value="ENSPPYG00000017930.3"/>
</dbReference>
<dbReference type="GeneID" id="100137028"/>
<dbReference type="KEGG" id="pon:100137028"/>
<dbReference type="CTD" id="858"/>
<dbReference type="eggNOG" id="ENOG502RZYX">
    <property type="taxonomic scope" value="Eukaryota"/>
</dbReference>
<dbReference type="GeneTree" id="ENSGT00950000183006"/>
<dbReference type="HOGENOM" id="CLU_102582_2_0_1"/>
<dbReference type="InParanoid" id="Q2IBD6"/>
<dbReference type="OMA" id="TRIFMDD"/>
<dbReference type="OrthoDB" id="5917823at2759"/>
<dbReference type="TreeFam" id="TF315736"/>
<dbReference type="Proteomes" id="UP000001595">
    <property type="component" value="Chromosome 7"/>
</dbReference>
<dbReference type="GO" id="GO:0002080">
    <property type="term" value="C:acrosomal membrane"/>
    <property type="evidence" value="ECO:0007669"/>
    <property type="project" value="Ensembl"/>
</dbReference>
<dbReference type="GO" id="GO:0005901">
    <property type="term" value="C:caveola"/>
    <property type="evidence" value="ECO:0000250"/>
    <property type="project" value="UniProtKB"/>
</dbReference>
<dbReference type="GO" id="GO:0002095">
    <property type="term" value="C:caveolar macromolecular signaling complex"/>
    <property type="evidence" value="ECO:0007669"/>
    <property type="project" value="Ensembl"/>
</dbReference>
<dbReference type="GO" id="GO:0005925">
    <property type="term" value="C:focal adhesion"/>
    <property type="evidence" value="ECO:0007669"/>
    <property type="project" value="Ensembl"/>
</dbReference>
<dbReference type="GO" id="GO:0000139">
    <property type="term" value="C:Golgi membrane"/>
    <property type="evidence" value="ECO:0007669"/>
    <property type="project" value="UniProtKB-SubCell"/>
</dbReference>
<dbReference type="GO" id="GO:0005634">
    <property type="term" value="C:nucleus"/>
    <property type="evidence" value="ECO:0007669"/>
    <property type="project" value="UniProtKB-SubCell"/>
</dbReference>
<dbReference type="GO" id="GO:0048471">
    <property type="term" value="C:perinuclear region of cytoplasm"/>
    <property type="evidence" value="ECO:0000250"/>
    <property type="project" value="UniProtKB"/>
</dbReference>
<dbReference type="GO" id="GO:0044853">
    <property type="term" value="C:plasma membrane raft"/>
    <property type="evidence" value="ECO:0000250"/>
    <property type="project" value="UniProtKB"/>
</dbReference>
<dbReference type="GO" id="GO:0042383">
    <property type="term" value="C:sarcolemma"/>
    <property type="evidence" value="ECO:0007669"/>
    <property type="project" value="TreeGrafter"/>
</dbReference>
<dbReference type="GO" id="GO:0030133">
    <property type="term" value="C:transport vesicle"/>
    <property type="evidence" value="ECO:0007669"/>
    <property type="project" value="Ensembl"/>
</dbReference>
<dbReference type="GO" id="GO:0031748">
    <property type="term" value="F:D1 dopamine receptor binding"/>
    <property type="evidence" value="ECO:0000250"/>
    <property type="project" value="UniProtKB"/>
</dbReference>
<dbReference type="GO" id="GO:0046982">
    <property type="term" value="F:protein heterodimerization activity"/>
    <property type="evidence" value="ECO:0007669"/>
    <property type="project" value="Ensembl"/>
</dbReference>
<dbReference type="GO" id="GO:0042803">
    <property type="term" value="F:protein homodimerization activity"/>
    <property type="evidence" value="ECO:0007669"/>
    <property type="project" value="Ensembl"/>
</dbReference>
<dbReference type="GO" id="GO:0019901">
    <property type="term" value="F:protein kinase binding"/>
    <property type="evidence" value="ECO:0007669"/>
    <property type="project" value="Ensembl"/>
</dbReference>
<dbReference type="GO" id="GO:0030674">
    <property type="term" value="F:protein-macromolecule adaptor activity"/>
    <property type="evidence" value="ECO:0007669"/>
    <property type="project" value="Ensembl"/>
</dbReference>
<dbReference type="GO" id="GO:0097110">
    <property type="term" value="F:scaffold protein binding"/>
    <property type="evidence" value="ECO:0007669"/>
    <property type="project" value="Ensembl"/>
</dbReference>
<dbReference type="GO" id="GO:0071711">
    <property type="term" value="P:basement membrane organization"/>
    <property type="evidence" value="ECO:0007669"/>
    <property type="project" value="Ensembl"/>
</dbReference>
<dbReference type="GO" id="GO:0070836">
    <property type="term" value="P:caveola assembly"/>
    <property type="evidence" value="ECO:0000250"/>
    <property type="project" value="UniProtKB"/>
</dbReference>
<dbReference type="GO" id="GO:0007029">
    <property type="term" value="P:endoplasmic reticulum organization"/>
    <property type="evidence" value="ECO:0000250"/>
    <property type="project" value="UniProtKB"/>
</dbReference>
<dbReference type="GO" id="GO:0001935">
    <property type="term" value="P:endothelial cell proliferation"/>
    <property type="evidence" value="ECO:0007669"/>
    <property type="project" value="Ensembl"/>
</dbReference>
<dbReference type="GO" id="GO:0008286">
    <property type="term" value="P:insulin receptor signaling pathway"/>
    <property type="evidence" value="ECO:0007669"/>
    <property type="project" value="Ensembl"/>
</dbReference>
<dbReference type="GO" id="GO:0007005">
    <property type="term" value="P:mitochondrion organization"/>
    <property type="evidence" value="ECO:0000250"/>
    <property type="project" value="UniProtKB"/>
</dbReference>
<dbReference type="GO" id="GO:0001937">
    <property type="term" value="P:negative regulation of endothelial cell proliferation"/>
    <property type="evidence" value="ECO:0000250"/>
    <property type="project" value="UniProtKB"/>
</dbReference>
<dbReference type="GO" id="GO:0014859">
    <property type="term" value="P:negative regulation of skeletal muscle cell proliferation"/>
    <property type="evidence" value="ECO:0007669"/>
    <property type="project" value="Ensembl"/>
</dbReference>
<dbReference type="GO" id="GO:0030512">
    <property type="term" value="P:negative regulation of transforming growth factor beta receptor signaling pathway"/>
    <property type="evidence" value="ECO:0007669"/>
    <property type="project" value="Ensembl"/>
</dbReference>
<dbReference type="GO" id="GO:0044794">
    <property type="term" value="P:positive regulation by host of viral process"/>
    <property type="evidence" value="ECO:0007669"/>
    <property type="project" value="Ensembl"/>
</dbReference>
<dbReference type="GO" id="GO:0060161">
    <property type="term" value="P:positive regulation of dopamine receptor signaling pathway"/>
    <property type="evidence" value="ECO:0000250"/>
    <property type="project" value="UniProtKB"/>
</dbReference>
<dbReference type="GO" id="GO:0001938">
    <property type="term" value="P:positive regulation of endothelial cell proliferation"/>
    <property type="evidence" value="ECO:0007669"/>
    <property type="project" value="Ensembl"/>
</dbReference>
<dbReference type="GO" id="GO:0043410">
    <property type="term" value="P:positive regulation of MAPK cascade"/>
    <property type="evidence" value="ECO:0007669"/>
    <property type="project" value="Ensembl"/>
</dbReference>
<dbReference type="GO" id="GO:0019065">
    <property type="term" value="P:receptor-mediated endocytosis of virus by host cell"/>
    <property type="evidence" value="ECO:0007669"/>
    <property type="project" value="Ensembl"/>
</dbReference>
<dbReference type="GO" id="GO:0051480">
    <property type="term" value="P:regulation of cytosolic calcium ion concentration"/>
    <property type="evidence" value="ECO:0007669"/>
    <property type="project" value="TreeGrafter"/>
</dbReference>
<dbReference type="GO" id="GO:0007088">
    <property type="term" value="P:regulation of mitotic nuclear division"/>
    <property type="evidence" value="ECO:0007669"/>
    <property type="project" value="Ensembl"/>
</dbReference>
<dbReference type="GO" id="GO:0014856">
    <property type="term" value="P:skeletal muscle cell proliferation"/>
    <property type="evidence" value="ECO:0007669"/>
    <property type="project" value="Ensembl"/>
</dbReference>
<dbReference type="GO" id="GO:0048741">
    <property type="term" value="P:skeletal muscle fiber development"/>
    <property type="evidence" value="ECO:0000250"/>
    <property type="project" value="UniProtKB"/>
</dbReference>
<dbReference type="GO" id="GO:0007179">
    <property type="term" value="P:transforming growth factor beta receptor signaling pathway"/>
    <property type="evidence" value="ECO:0007669"/>
    <property type="project" value="Ensembl"/>
</dbReference>
<dbReference type="GO" id="GO:0048278">
    <property type="term" value="P:vesicle docking"/>
    <property type="evidence" value="ECO:0000250"/>
    <property type="project" value="UniProtKB"/>
</dbReference>
<dbReference type="GO" id="GO:0006906">
    <property type="term" value="P:vesicle fusion"/>
    <property type="evidence" value="ECO:0000250"/>
    <property type="project" value="UniProtKB"/>
</dbReference>
<dbReference type="GO" id="GO:0019076">
    <property type="term" value="P:viral release from host cell"/>
    <property type="evidence" value="ECO:0007669"/>
    <property type="project" value="Ensembl"/>
</dbReference>
<dbReference type="InterPro" id="IPR001612">
    <property type="entry name" value="Caveolin"/>
</dbReference>
<dbReference type="InterPro" id="IPR018361">
    <property type="entry name" value="Caveolin_CS"/>
</dbReference>
<dbReference type="PANTHER" id="PTHR10844">
    <property type="entry name" value="CAVEOLIN"/>
    <property type="match status" value="1"/>
</dbReference>
<dbReference type="PANTHER" id="PTHR10844:SF3">
    <property type="entry name" value="CAVEOLIN-2"/>
    <property type="match status" value="1"/>
</dbReference>
<dbReference type="Pfam" id="PF01146">
    <property type="entry name" value="Caveolin"/>
    <property type="match status" value="1"/>
</dbReference>
<dbReference type="PROSITE" id="PS01210">
    <property type="entry name" value="CAVEOLIN"/>
    <property type="match status" value="1"/>
</dbReference>
<evidence type="ECO:0000250" key="1"/>
<evidence type="ECO:0000250" key="2">
    <source>
        <dbReference type="UniProtKB" id="P51636"/>
    </source>
</evidence>
<evidence type="ECO:0000250" key="3">
    <source>
        <dbReference type="UniProtKB" id="Q9WVC3"/>
    </source>
</evidence>
<evidence type="ECO:0000255" key="4"/>
<evidence type="ECO:0000305" key="5"/>
<comment type="function">
    <text evidence="1">May act as a scaffolding protein within caveolar membranes. Interacts directly with G-protein alpha subunits and can functionally regulate their activity. Acts as an accessory protein in conjunction with CAV1 in targeting to lipid rafts and driving caveolae formation. The Ser-36 phosphorylated form has a role in modulating mitosis in endothelial cells. Positive regulator of cellular mitogenesis of the MAPK signaling pathway. Required for the insulin-stimulated nuclear translocation and activation of MAPK1 and STAT3, and the subsequent regulation of cell cycle progression (By similarity).</text>
</comment>
<comment type="subunit">
    <text evidence="1">Monomer or homodimer (By similarity). Interacts with CAV1; the interaction forms a stable heterooligomeric complex that is required for targeting to lipid rafts and for caveolae formation. Tyrosine phosphorylated forms do not form heterooligomers with the Tyr-19-phosphorylated form existing as a monomer or dimer, and the Tyr-27-form as a monomer only. Interacts (tyrosine phosphorylated form) with the SH2 domain-containing proteins, RASA1, NCK1 and SRC. Interacts (tyrosine phosphorylated form) with INSR, the interaction (Tyr-27-phosphorylated form) is increased on insulin stimulation. Interacts (Tyr-19 phosphorylated form) with MAPK1 (phosphorylated form); the interaction, promoted by insulin, leads to nuclear location and MAPK1 activation. Interacts with STAT3; the interaction is increased on insulin-induced tyrosine phosphorylation leading to STAT activation (By similarity).</text>
</comment>
<comment type="subcellular location">
    <subcellularLocation>
        <location evidence="1">Nucleus</location>
    </subcellularLocation>
    <subcellularLocation>
        <location evidence="1">Cytoplasm</location>
    </subcellularLocation>
    <subcellularLocation>
        <location>Golgi apparatus membrane</location>
        <topology>Peripheral membrane protein</topology>
    </subcellularLocation>
    <subcellularLocation>
        <location>Cell membrane</location>
        <topology>Peripheral membrane protein</topology>
    </subcellularLocation>
    <subcellularLocation>
        <location>Membrane</location>
        <location>Caveola</location>
        <topology>Peripheral membrane protein</topology>
    </subcellularLocation>
    <text evidence="1">Potential hairpin-like structure in the membrane. Membrane protein of caveolae. Tyr-19-phosphorylated form is enriched at sites of cell-cell contact and is translocated to the nucleus in complex with MAPK1 in response to insulin (By similarity). Tyr-27-phosphorylated form is located both in the cytoplasm and plasma membrane. CAV1-mediated Ser-23-phosphorylated form locates to the plasma membrane. Ser-36-phosphorylated form resides in intracellular compartments.</text>
</comment>
<comment type="PTM">
    <text evidence="1">Phosphorylated on serine and tyrosine residues. CAV1 promotes phosphorylation on Ser-23 which then targets the complex to the plasma membrane, lipid rafts and caveolae. Phosphorylation on Ser-36 appears to modulate mitosis in endothelial cells (By similarity). Phosphorylation on both Tyr-19 and Tyr-27 is required for insulin-induced 'Ser-727' phosphorylation of STAT3 and its activation. Phosphorylation on Tyr-19 is required for insulin-induced phosphorylation of MAPK1 and DNA binding of STAT3. Tyrosine phosphorylation is induced by both EGF and insulin (By. similarity).</text>
</comment>
<comment type="similarity">
    <text evidence="5">Belongs to the caveolin family.</text>
</comment>
<protein>
    <recommendedName>
        <fullName>Caveolin-2</fullName>
    </recommendedName>
</protein>
<sequence length="162" mass="18217">MGLETEKADVQLFMDDDSYSHHSGLEYADPEKFADSGQDRDPHRLNSHLKLGFEDVIAEPVTTHSFDKVWICSHALFEISKYVMYKFLTVFLAIPLAFIAGILFATLSCLHIWILMPFVKTCLMVLPSVQTIWKSVTDVIIAPLCTSVGRSFSSVSLQLSQD</sequence>
<proteinExistence type="inferred from homology"/>
<gene>
    <name type="primary">CAV2</name>
</gene>
<reference key="1">
    <citation type="submission" date="2006-01" db="EMBL/GenBank/DDBJ databases">
        <title>NISC comparative sequencing initiative.</title>
        <authorList>
            <person name="Antonellis A."/>
            <person name="Ayele K."/>
            <person name="Benjamin B."/>
            <person name="Blakesley R.W."/>
            <person name="Boakye A."/>
            <person name="Bouffard G.G."/>
            <person name="Brinkley C."/>
            <person name="Brooks S."/>
            <person name="Chu G."/>
            <person name="Coleman H."/>
            <person name="Engle J."/>
            <person name="Gestole M."/>
            <person name="Greene A."/>
            <person name="Guan X."/>
            <person name="Gupta J."/>
            <person name="Haghighi P."/>
            <person name="Han J."/>
            <person name="Hansen N."/>
            <person name="Ho S.-L."/>
            <person name="Hu P."/>
            <person name="Hunter G."/>
            <person name="Hurle B."/>
            <person name="Idol J.R."/>
            <person name="Kwong P."/>
            <person name="Laric P."/>
            <person name="Larson S."/>
            <person name="Lee-Lin S.-Q."/>
            <person name="Legaspi R."/>
            <person name="Madden M."/>
            <person name="Maduro Q.L."/>
            <person name="Maduro V.B."/>
            <person name="Margulies E.H."/>
            <person name="Masiello C."/>
            <person name="Maskeri B."/>
            <person name="McDowell J."/>
            <person name="Mojidi H.A."/>
            <person name="Mullikin J.C."/>
            <person name="Oestreicher J.S."/>
            <person name="Park M."/>
            <person name="Portnoy M.E."/>
            <person name="Prasad A."/>
            <person name="Puri O."/>
            <person name="Reddix-Dugue N."/>
            <person name="Schandler K."/>
            <person name="Schueler M.G."/>
            <person name="Sison C."/>
            <person name="Stantripop S."/>
            <person name="Stephen E."/>
            <person name="Taye A."/>
            <person name="Thomas J.W."/>
            <person name="Thomas P.J."/>
            <person name="Tsipouri V."/>
            <person name="Ung L."/>
            <person name="Vogt J.L."/>
            <person name="Wetherby K.D."/>
            <person name="Young A."/>
            <person name="Green E.D."/>
        </authorList>
    </citation>
    <scope>NUCLEOTIDE SEQUENCE [LARGE SCALE GENOMIC DNA]</scope>
</reference>
<accession>Q2IBD6</accession>
<organism>
    <name type="scientific">Pongo abelii</name>
    <name type="common">Sumatran orangutan</name>
    <name type="synonym">Pongo pygmaeus abelii</name>
    <dbReference type="NCBI Taxonomy" id="9601"/>
    <lineage>
        <taxon>Eukaryota</taxon>
        <taxon>Metazoa</taxon>
        <taxon>Chordata</taxon>
        <taxon>Craniata</taxon>
        <taxon>Vertebrata</taxon>
        <taxon>Euteleostomi</taxon>
        <taxon>Mammalia</taxon>
        <taxon>Eutheria</taxon>
        <taxon>Euarchontoglires</taxon>
        <taxon>Primates</taxon>
        <taxon>Haplorrhini</taxon>
        <taxon>Catarrhini</taxon>
        <taxon>Hominidae</taxon>
        <taxon>Pongo</taxon>
    </lineage>
</organism>
<feature type="chain" id="PRO_0000229035" description="Caveolin-2">
    <location>
        <begin position="1"/>
        <end position="162"/>
    </location>
</feature>
<feature type="topological domain" description="Cytoplasmic" evidence="4">
    <location>
        <begin position="1"/>
        <end position="86"/>
    </location>
</feature>
<feature type="intramembrane region" description="Helical" evidence="4">
    <location>
        <begin position="87"/>
        <end position="107"/>
    </location>
</feature>
<feature type="topological domain" description="Cytoplasmic" evidence="4">
    <location>
        <begin position="108"/>
        <end position="162"/>
    </location>
</feature>
<feature type="modified residue" description="Phosphotyrosine; by SRC" evidence="2">
    <location>
        <position position="19"/>
    </location>
</feature>
<feature type="modified residue" description="Phosphoserine" evidence="3">
    <location>
        <position position="20"/>
    </location>
</feature>
<feature type="modified residue" description="Phosphoserine" evidence="2">
    <location>
        <position position="23"/>
    </location>
</feature>
<feature type="modified residue" description="Phosphotyrosine; by SRC" evidence="2">
    <location>
        <position position="27"/>
    </location>
</feature>
<feature type="modified residue" description="Phosphoserine" evidence="2">
    <location>
        <position position="36"/>
    </location>
</feature>
<name>CAV2_PONAB</name>